<sequence>MMTSCRNIDLGTMMMACGCGRRQFPSLAKTVCKFTSSNRSYGGLVGSCKAVPTKSKEISLLNGIGQSQTVSFDLKQESKQPISLVTLFELVAVDLQTLNDNLLSIVGAENPVLISAAEQIFGAGGKRMRPGLVFLVSHATAELAGLKELTTEHRRLAEIIEMIHTASLIHDDVLDESDMRRGKETVHELFGTRVAVLAGDFMFAQASWYLANLENLEVIKLISQVIKDFASGEIKQASSLFDCDTKLDEYLLKSFYKTASLVAASTKGAAIFSRVEPDVTEQMYEFGKNLGLSFQIVDDILDFTQSTEQLGKPAGSDLAKGNLTAPVIFALEREPRLREIIESEFCEAGSLEEAIEAVTKGGGIKRAQELAREKADDAIKNLQCLPRSGFRSALEDMVLYNLERID</sequence>
<comment type="function">
    <text evidence="5 7 8 10">Involved in providing solanesyl diphosphate for plastoquinone-9 (PQ-9) formation in plastids (PubMed:12437513, PubMed:23913686, PubMed:26039552). Catalyzes the elongation of the prenyl side chain of PQ-9 in plastids (PubMed:23913686, PubMed:26039552). Contributes to the biosynthesis of plastochromanol-8 (PC-8) in plastids (PubMed:23913686, PubMed:26039552). Does not contribute to the synthesis of tocopherol or ubiquinone (PubMed:23913686). PQ-9 and PC-8 are lipophilic antioxidants that act as protectant against photooxidative stress under high light stress conditions (PubMed:23913686, PubMed:26039552, PubMed:29901834). Prefers geranylgeranyl diphosphate to farnesyl diphosphate as substrate (PubMed:12437513). No activity with geranyl diphosphate or dimethylallyl diphosphate as substrate (PubMed:12437513).</text>
</comment>
<comment type="catalytic activity">
    <reaction evidence="5">
        <text>5 isopentenyl diphosphate + (2E,6E,10E)-geranylgeranyl diphosphate = all-trans-nonaprenyl diphosphate + 5 diphosphate</text>
        <dbReference type="Rhea" id="RHEA:27594"/>
        <dbReference type="ChEBI" id="CHEBI:33019"/>
        <dbReference type="ChEBI" id="CHEBI:58391"/>
        <dbReference type="ChEBI" id="CHEBI:58756"/>
        <dbReference type="ChEBI" id="CHEBI:128769"/>
        <dbReference type="EC" id="2.5.1.85"/>
    </reaction>
    <physiologicalReaction direction="left-to-right" evidence="5">
        <dbReference type="Rhea" id="RHEA:27595"/>
    </physiologicalReaction>
</comment>
<comment type="catalytic activity">
    <reaction evidence="5">
        <text>isopentenyl diphosphate + (2E,6E)-farnesyl diphosphate = (2E,6E,10E)-geranylgeranyl diphosphate + diphosphate</text>
        <dbReference type="Rhea" id="RHEA:17653"/>
        <dbReference type="ChEBI" id="CHEBI:33019"/>
        <dbReference type="ChEBI" id="CHEBI:58756"/>
        <dbReference type="ChEBI" id="CHEBI:128769"/>
        <dbReference type="ChEBI" id="CHEBI:175763"/>
        <dbReference type="EC" id="2.5.1.29"/>
    </reaction>
    <physiologicalReaction direction="left-to-right" evidence="5">
        <dbReference type="Rhea" id="RHEA:17654"/>
    </physiologicalReaction>
</comment>
<comment type="cofactor">
    <cofactor evidence="1">
        <name>Mg(2+)</name>
        <dbReference type="ChEBI" id="CHEBI:18420"/>
    </cofactor>
    <text evidence="1">Binds 2 Mg(2+) ions per subunit.</text>
</comment>
<comment type="biophysicochemical properties">
    <kinetics>
        <KM evidence="5">5.73 uM for farnesyl diphosphate (in the presence of 500 uM of isopentenyl diphosphate)</KM>
        <KM evidence="5">1.61 uM for geranylgeranyl diphosphate (in the presence of 100 uM of isopentenyl diphosphate)</KM>
        <KM evidence="5">151 uM for isopentenyl diphosphate (in the presence of 20 uM of farnesyl diphosphate)</KM>
        <KM evidence="5">20 uM for isopentenyl diphosphate (in the presence of 4 uM of geranylgeranyl diphosphate)</KM>
        <text>kcat is 29.7 sec(-1) with farnesyl diphosphate as substrate (in the presence of 500 uM of isopentenyl diphosphate). kcat is 21.0 sec(-1) with geranylgeranyl diphosphate as substrate (in the presence of 100 uM of isopentenyl diphosphate). kcat is 14.7 sec(-1) with isopentenyl diphosphate as substrate (in the presence of 20 uM of farnesyl diphosphate). kcat is 15.0 sec(-1) with isopentenyl diphosphate as substrate (in the presence of 4 uM of geranylgeranyl diphosphate).</text>
    </kinetics>
    <phDependence>
        <text evidence="5">Optimum pH is 8.0.</text>
    </phDependence>
</comment>
<comment type="subunit">
    <text evidence="5 9">Homodimer (PubMed:12437513). Interacts with FBN5 (PubMed:26432861).</text>
</comment>
<comment type="subcellular location">
    <subcellularLocation>
        <location evidence="7 9">Plastid</location>
        <location evidence="7 9">Chloroplast</location>
    </subcellularLocation>
</comment>
<comment type="alternative products">
    <event type="alternative splicing"/>
    <isoform>
        <id>Q8S948-1</id>
        <name>1</name>
        <sequence type="displayed"/>
    </isoform>
    <isoform>
        <id>Q8S948-2</id>
        <name>2</name>
        <sequence type="described" ref="VSP_042134"/>
    </isoform>
</comment>
<comment type="tissue specificity">
    <text evidence="6">Higher expression in leaves than in roots.</text>
</comment>
<comment type="induction">
    <text evidence="8">Induced by high light conditions.</text>
</comment>
<comment type="disruption phenotype">
    <text evidence="7">Decreased levels of plastoquinone-9 (PQ-9) and plastochromanol-8 (PC-8) in leaves (PubMed:23913686). The double mutants sps1 and sps2 exhibit an albino phenotype and are devoided of both PQ-9 and PC-8 in cotyledons (PubMed:23913686).</text>
</comment>
<comment type="miscellaneous">
    <text evidence="8 10">Plants over-expressing SPS1 exhibit increased resistance to photooxidative stress, decreases in leaf bleaching, lipid peroxidation and PSII photoinhibition under excess light due to their increased capacities for plastoquinone-9 (PQ-9) biosynthesis (PubMed:26039552). Plants over-expressing SPS1 exhibit decreased singlet oxygen production in response to photooxidative stress due to increased levels of PQ-9, which acts as a chemical quencher of singlet oxygen (PubMed:29901834).</text>
</comment>
<comment type="similarity">
    <text evidence="13">Belongs to the FPP/GGPP synthase family.</text>
</comment>
<comment type="sequence caution" evidence="13">
    <conflict type="erroneous gene model prediction">
        <sequence resource="EMBL-CDS" id="AAD30584"/>
    </conflict>
</comment>
<feature type="transit peptide" description="Chloroplast" evidence="4">
    <location>
        <begin position="1"/>
        <end position="71"/>
    </location>
</feature>
<feature type="chain" id="PRO_0000414848" description="Solanesyl diphosphate synthase 1, chloroplastic">
    <location>
        <begin position="72"/>
        <end position="406"/>
    </location>
</feature>
<feature type="binding site" evidence="2">
    <location>
        <position position="126"/>
    </location>
    <ligand>
        <name>isopentenyl diphosphate</name>
        <dbReference type="ChEBI" id="CHEBI:128769"/>
    </ligand>
</feature>
<feature type="binding site" evidence="2">
    <location>
        <position position="129"/>
    </location>
    <ligand>
        <name>isopentenyl diphosphate</name>
        <dbReference type="ChEBI" id="CHEBI:128769"/>
    </ligand>
</feature>
<feature type="binding site" evidence="3">
    <location>
        <position position="164"/>
    </location>
    <ligand>
        <name>isopentenyl diphosphate</name>
        <dbReference type="ChEBI" id="CHEBI:128769"/>
    </ligand>
</feature>
<feature type="binding site" evidence="2">
    <location>
        <position position="171"/>
    </location>
    <ligand>
        <name>Mg(2+)</name>
        <dbReference type="ChEBI" id="CHEBI:18420"/>
        <label>1</label>
    </ligand>
</feature>
<feature type="binding site" evidence="2">
    <location>
        <position position="171"/>
    </location>
    <ligand>
        <name>Mg(2+)</name>
        <dbReference type="ChEBI" id="CHEBI:18420"/>
        <label>2</label>
    </ligand>
</feature>
<feature type="binding site" evidence="2">
    <location>
        <position position="175"/>
    </location>
    <ligand>
        <name>Mg(2+)</name>
        <dbReference type="ChEBI" id="CHEBI:18420"/>
        <label>1</label>
    </ligand>
</feature>
<feature type="binding site" evidence="2">
    <location>
        <position position="175"/>
    </location>
    <ligand>
        <name>Mg(2+)</name>
        <dbReference type="ChEBI" id="CHEBI:18420"/>
        <label>2</label>
    </ligand>
</feature>
<feature type="binding site" evidence="1">
    <location>
        <position position="180"/>
    </location>
    <ligand>
        <name>an all-trans-polyprenyl diphosphate</name>
        <dbReference type="ChEBI" id="CHEBI:58914"/>
    </ligand>
</feature>
<feature type="binding site" evidence="2">
    <location>
        <position position="181"/>
    </location>
    <ligand>
        <name>isopentenyl diphosphate</name>
        <dbReference type="ChEBI" id="CHEBI:128769"/>
    </ligand>
</feature>
<feature type="binding site" evidence="1">
    <location>
        <position position="257"/>
    </location>
    <ligand>
        <name>an all-trans-polyprenyl diphosphate</name>
        <dbReference type="ChEBI" id="CHEBI:58914"/>
    </ligand>
</feature>
<feature type="binding site" evidence="1">
    <location>
        <position position="258"/>
    </location>
    <ligand>
        <name>an all-trans-polyprenyl diphosphate</name>
        <dbReference type="ChEBI" id="CHEBI:58914"/>
    </ligand>
</feature>
<feature type="binding site" evidence="1">
    <location>
        <position position="295"/>
    </location>
    <ligand>
        <name>an all-trans-polyprenyl diphosphate</name>
        <dbReference type="ChEBI" id="CHEBI:58914"/>
    </ligand>
</feature>
<feature type="binding site" evidence="1">
    <location>
        <position position="312"/>
    </location>
    <ligand>
        <name>an all-trans-polyprenyl diphosphate</name>
        <dbReference type="ChEBI" id="CHEBI:58914"/>
    </ligand>
</feature>
<feature type="splice variant" id="VSP_042134" description="In isoform 2." evidence="13">
    <original>MMTSCRNIDLGTMMMACGCGRRQFPSLAKTVCKFTSSNRSYGGLVGSCKAVPTKSKEISLLNG</original>
    <variation>MAVWWGVAKRCQRNQRRSLCSMVC</variation>
    <location>
        <begin position="1"/>
        <end position="63"/>
    </location>
</feature>
<feature type="sequence conflict" description="In Ref. 6; BAF01575." evidence="13" ref="6">
    <original>S</original>
    <variation>G</variation>
    <location>
        <position position="388"/>
    </location>
</feature>
<reference key="1">
    <citation type="journal article" date="2003" name="Biochem. J.">
        <title>Cloning and kinetic characterization of Arabidopsis thaliana solanesyl diphosphate synthase.</title>
        <authorList>
            <person name="Hirooka K."/>
            <person name="Bamba T."/>
            <person name="Fukusaki E."/>
            <person name="Kobayashi A."/>
        </authorList>
    </citation>
    <scope>NUCLEOTIDE SEQUENCE [MRNA] (ISOFORM 1)</scope>
    <scope>FUNCTION</scope>
    <scope>CATALYTIC ACTIVITY</scope>
    <scope>SUBUNIT</scope>
    <scope>BIOPHYSICOCHEMICAL PROPERTIES</scope>
</reference>
<reference key="2">
    <citation type="journal article" date="2004" name="Plant Cell Physiol.">
        <title>Identification and subcellular localization of two solanesyl diphosphate synthases from Arabidopsis thaliana.</title>
        <authorList>
            <person name="Luo J."/>
            <person name="Saiki R."/>
            <person name="Tatsumi K."/>
            <person name="Nakagawa T."/>
            <person name="Kawamukai M."/>
        </authorList>
    </citation>
    <scope>NUCLEOTIDE SEQUENCE [MRNA] (ISOFORM 1)</scope>
</reference>
<reference key="3">
    <citation type="journal article" date="2000" name="Nature">
        <title>Sequence and analysis of chromosome 1 of the plant Arabidopsis thaliana.</title>
        <authorList>
            <person name="Theologis A."/>
            <person name="Ecker J.R."/>
            <person name="Palm C.J."/>
            <person name="Federspiel N.A."/>
            <person name="Kaul S."/>
            <person name="White O."/>
            <person name="Alonso J."/>
            <person name="Altafi H."/>
            <person name="Araujo R."/>
            <person name="Bowman C.L."/>
            <person name="Brooks S.Y."/>
            <person name="Buehler E."/>
            <person name="Chan A."/>
            <person name="Chao Q."/>
            <person name="Chen H."/>
            <person name="Cheuk R.F."/>
            <person name="Chin C.W."/>
            <person name="Chung M.K."/>
            <person name="Conn L."/>
            <person name="Conway A.B."/>
            <person name="Conway A.R."/>
            <person name="Creasy T.H."/>
            <person name="Dewar K."/>
            <person name="Dunn P."/>
            <person name="Etgu P."/>
            <person name="Feldblyum T.V."/>
            <person name="Feng J.-D."/>
            <person name="Fong B."/>
            <person name="Fujii C.Y."/>
            <person name="Gill J.E."/>
            <person name="Goldsmith A.D."/>
            <person name="Haas B."/>
            <person name="Hansen N.F."/>
            <person name="Hughes B."/>
            <person name="Huizar L."/>
            <person name="Hunter J.L."/>
            <person name="Jenkins J."/>
            <person name="Johnson-Hopson C."/>
            <person name="Khan S."/>
            <person name="Khaykin E."/>
            <person name="Kim C.J."/>
            <person name="Koo H.L."/>
            <person name="Kremenetskaia I."/>
            <person name="Kurtz D.B."/>
            <person name="Kwan A."/>
            <person name="Lam B."/>
            <person name="Langin-Hooper S."/>
            <person name="Lee A."/>
            <person name="Lee J.M."/>
            <person name="Lenz C.A."/>
            <person name="Li J.H."/>
            <person name="Li Y.-P."/>
            <person name="Lin X."/>
            <person name="Liu S.X."/>
            <person name="Liu Z.A."/>
            <person name="Luros J.S."/>
            <person name="Maiti R."/>
            <person name="Marziali A."/>
            <person name="Militscher J."/>
            <person name="Miranda M."/>
            <person name="Nguyen M."/>
            <person name="Nierman W.C."/>
            <person name="Osborne B.I."/>
            <person name="Pai G."/>
            <person name="Peterson J."/>
            <person name="Pham P.K."/>
            <person name="Rizzo M."/>
            <person name="Rooney T."/>
            <person name="Rowley D."/>
            <person name="Sakano H."/>
            <person name="Salzberg S.L."/>
            <person name="Schwartz J.R."/>
            <person name="Shinn P."/>
            <person name="Southwick A.M."/>
            <person name="Sun H."/>
            <person name="Tallon L.J."/>
            <person name="Tambunga G."/>
            <person name="Toriumi M.J."/>
            <person name="Town C.D."/>
            <person name="Utterback T."/>
            <person name="Van Aken S."/>
            <person name="Vaysberg M."/>
            <person name="Vysotskaia V.S."/>
            <person name="Walker M."/>
            <person name="Wu D."/>
            <person name="Yu G."/>
            <person name="Fraser C.M."/>
            <person name="Venter J.C."/>
            <person name="Davis R.W."/>
        </authorList>
    </citation>
    <scope>NUCLEOTIDE SEQUENCE [LARGE SCALE GENOMIC DNA]</scope>
    <source>
        <strain>cv. Columbia</strain>
    </source>
</reference>
<reference key="4">
    <citation type="journal article" date="2017" name="Plant J.">
        <title>Araport11: a complete reannotation of the Arabidopsis thaliana reference genome.</title>
        <authorList>
            <person name="Cheng C.Y."/>
            <person name="Krishnakumar V."/>
            <person name="Chan A.P."/>
            <person name="Thibaud-Nissen F."/>
            <person name="Schobel S."/>
            <person name="Town C.D."/>
        </authorList>
    </citation>
    <scope>GENOME REANNOTATION</scope>
    <source>
        <strain>cv. Columbia</strain>
    </source>
</reference>
<reference key="5">
    <citation type="submission" date="2006-05" db="EMBL/GenBank/DDBJ databases">
        <title>Arabidopsis ORF clones.</title>
        <authorList>
            <person name="Shinn P."/>
            <person name="Chen H."/>
            <person name="Kim C.J."/>
            <person name="Quinitio C."/>
            <person name="Ecker J.R."/>
        </authorList>
    </citation>
    <scope>NUCLEOTIDE SEQUENCE [LARGE SCALE MRNA] (ISOFORM 1)</scope>
</reference>
<reference key="6">
    <citation type="submission" date="2006-07" db="EMBL/GenBank/DDBJ databases">
        <title>Large-scale analysis of RIKEN Arabidopsis full-length (RAFL) cDNAs.</title>
        <authorList>
            <person name="Totoki Y."/>
            <person name="Seki M."/>
            <person name="Ishida J."/>
            <person name="Nakajima M."/>
            <person name="Enju A."/>
            <person name="Kamiya A."/>
            <person name="Narusaka M."/>
            <person name="Shin-i T."/>
            <person name="Nakagawa M."/>
            <person name="Sakamoto N."/>
            <person name="Oishi K."/>
            <person name="Kohara Y."/>
            <person name="Kobayashi M."/>
            <person name="Toyoda A."/>
            <person name="Sakaki Y."/>
            <person name="Sakurai T."/>
            <person name="Iida K."/>
            <person name="Akiyama K."/>
            <person name="Satou M."/>
            <person name="Toyoda T."/>
            <person name="Konagaya A."/>
            <person name="Carninci P."/>
            <person name="Kawai J."/>
            <person name="Hayashizaki Y."/>
            <person name="Shinozaki K."/>
        </authorList>
    </citation>
    <scope>NUCLEOTIDE SEQUENCE [LARGE SCALE MRNA] (ISOFORM 1)</scope>
    <source>
        <strain>cv. Columbia</strain>
    </source>
</reference>
<reference key="7">
    <citation type="journal article" date="2005" name="Biosci. Biotechnol. Biochem.">
        <title>Functional analysis of two solanesyl diphosphate synthases from Arabidopsis thaliana.</title>
        <authorList>
            <person name="Hirooka K."/>
            <person name="Izumi Y."/>
            <person name="An C.I."/>
            <person name="Nakazawa Y."/>
            <person name="Fukusaki E."/>
            <person name="Kobayashi A."/>
        </authorList>
    </citation>
    <scope>TISSUE SPECIFICITY</scope>
</reference>
<reference key="8">
    <citation type="journal article" date="2013" name="J. Biol. Chem.">
        <title>Functional modeling identifies paralogous solanesyl-diphosphate synthases that assemble the side chain of plastoquinone-9 in plastids.</title>
        <authorList>
            <person name="Block A."/>
            <person name="Fristedt R."/>
            <person name="Rogers S."/>
            <person name="Kumar J."/>
            <person name="Barnes B."/>
            <person name="Barnes J."/>
            <person name="Elowsky C.G."/>
            <person name="Wamboldt Y."/>
            <person name="Mackenzie S.A."/>
            <person name="Redding K."/>
            <person name="Merchant S.S."/>
            <person name="Basset G.J."/>
        </authorList>
    </citation>
    <scope>FUNCTION</scope>
    <scope>SUBCELLULAR LOCATION</scope>
    <scope>DISRUPTION PHENOTYPE</scope>
</reference>
<reference key="9">
    <citation type="journal article" date="2015" name="Plant Cell">
        <title>Fibrillin 5 is essential for plastoquinone-9 biosynthesis by binding to solanesyl diphosphate synthases in Arabidopsis.</title>
        <authorList>
            <person name="Kim E.H."/>
            <person name="Lee Y."/>
            <person name="Kim H.U."/>
        </authorList>
    </citation>
    <scope>INTERACTION WITH FBN5</scope>
    <scope>SUBCELLULAR LOCATION</scope>
</reference>
<reference key="10">
    <citation type="journal article" date="2015" name="Sci. Rep.">
        <title>Plant tolerance to excess light energy and photooxidative damage relies on plastoquinone biosynthesis.</title>
        <authorList>
            <person name="Ksas B."/>
            <person name="Becuwe N."/>
            <person name="Chevalier A."/>
            <person name="Havaux M."/>
        </authorList>
    </citation>
    <scope>FUNCTION</scope>
    <scope>INDUCTION BY HIGH LIGHT</scope>
</reference>
<reference key="11">
    <citation type="journal article" date="2018" name="Plant J.">
        <title>Chemical quenching of singlet oxygen by plastoquinols and their oxidation products in Arabidopsis.</title>
        <authorList>
            <person name="Ferretti U."/>
            <person name="Ciura J."/>
            <person name="Ksas B."/>
            <person name="Rac M."/>
            <person name="Sedlarova M."/>
            <person name="Kruk J."/>
            <person name="Havaux M."/>
            <person name="Pospisil P."/>
        </authorList>
    </citation>
    <scope>FUNCTION</scope>
</reference>
<gene>
    <name evidence="12" type="primary">SPS1</name>
    <name evidence="13" type="synonym">SPPS</name>
    <name evidence="11" type="synonym">SPS</name>
    <name evidence="14" type="ordered locus">At1g78510</name>
    <name evidence="15" type="ORF">T30F21.15</name>
</gene>
<evidence type="ECO:0000250" key="1"/>
<evidence type="ECO:0000250" key="2">
    <source>
        <dbReference type="UniProtKB" id="P14324"/>
    </source>
</evidence>
<evidence type="ECO:0000250" key="3">
    <source>
        <dbReference type="UniProtKB" id="Q12051"/>
    </source>
</evidence>
<evidence type="ECO:0000255" key="4"/>
<evidence type="ECO:0000269" key="5">
    <source>
    </source>
</evidence>
<evidence type="ECO:0000269" key="6">
    <source>
    </source>
</evidence>
<evidence type="ECO:0000269" key="7">
    <source>
    </source>
</evidence>
<evidence type="ECO:0000269" key="8">
    <source>
    </source>
</evidence>
<evidence type="ECO:0000269" key="9">
    <source>
    </source>
</evidence>
<evidence type="ECO:0000269" key="10">
    <source>
    </source>
</evidence>
<evidence type="ECO:0000303" key="11">
    <source>
    </source>
</evidence>
<evidence type="ECO:0000303" key="12">
    <source>
    </source>
</evidence>
<evidence type="ECO:0000305" key="13"/>
<evidence type="ECO:0000312" key="14">
    <source>
        <dbReference type="Araport" id="AT1G78510"/>
    </source>
</evidence>
<evidence type="ECO:0000312" key="15">
    <source>
        <dbReference type="EMBL" id="AAD30584.1"/>
    </source>
</evidence>
<dbReference type="EC" id="2.5.1.85" evidence="5"/>
<dbReference type="EC" id="2.5.1.29" evidence="5"/>
<dbReference type="EMBL" id="AB071514">
    <property type="protein sequence ID" value="BAB86941.1"/>
    <property type="molecule type" value="mRNA"/>
</dbReference>
<dbReference type="EMBL" id="AB188497">
    <property type="protein sequence ID" value="BAD88533.1"/>
    <property type="molecule type" value="mRNA"/>
</dbReference>
<dbReference type="EMBL" id="AC007260">
    <property type="protein sequence ID" value="AAD30584.1"/>
    <property type="status" value="ALT_SEQ"/>
    <property type="molecule type" value="Genomic_DNA"/>
</dbReference>
<dbReference type="EMBL" id="CP002684">
    <property type="protein sequence ID" value="AEE36114.1"/>
    <property type="molecule type" value="Genomic_DNA"/>
</dbReference>
<dbReference type="EMBL" id="CP002684">
    <property type="protein sequence ID" value="AEE36115.1"/>
    <property type="molecule type" value="Genomic_DNA"/>
</dbReference>
<dbReference type="EMBL" id="BT025550">
    <property type="protein sequence ID" value="ABF58968.1"/>
    <property type="molecule type" value="mRNA"/>
</dbReference>
<dbReference type="EMBL" id="AK229738">
    <property type="protein sequence ID" value="BAF01575.1"/>
    <property type="molecule type" value="mRNA"/>
</dbReference>
<dbReference type="PIR" id="F96813">
    <property type="entry name" value="F96813"/>
</dbReference>
<dbReference type="RefSeq" id="NP_001077840.1">
    <molecule id="Q8S948-2"/>
    <property type="nucleotide sequence ID" value="NM_001084371.1"/>
</dbReference>
<dbReference type="RefSeq" id="NP_177972.2">
    <molecule id="Q8S948-1"/>
    <property type="nucleotide sequence ID" value="NM_106498.4"/>
</dbReference>
<dbReference type="SMR" id="Q8S948"/>
<dbReference type="BioGRID" id="29406">
    <property type="interactions" value="2"/>
</dbReference>
<dbReference type="FunCoup" id="Q8S948">
    <property type="interactions" value="188"/>
</dbReference>
<dbReference type="STRING" id="3702.Q8S948"/>
<dbReference type="SwissLipids" id="SLP:000001502">
    <molecule id="Q8S948-1"/>
</dbReference>
<dbReference type="iPTMnet" id="Q8S948"/>
<dbReference type="PaxDb" id="3702-AT1G78510.1"/>
<dbReference type="ProteomicsDB" id="245348">
    <molecule id="Q8S948-1"/>
</dbReference>
<dbReference type="EnsemblPlants" id="AT1G78510.1">
    <molecule id="Q8S948-1"/>
    <property type="protein sequence ID" value="AT1G78510.1"/>
    <property type="gene ID" value="AT1G78510"/>
</dbReference>
<dbReference type="EnsemblPlants" id="AT1G78510.2">
    <molecule id="Q8S948-2"/>
    <property type="protein sequence ID" value="AT1G78510.2"/>
    <property type="gene ID" value="AT1G78510"/>
</dbReference>
<dbReference type="GeneID" id="844187"/>
<dbReference type="Gramene" id="AT1G78510.1">
    <molecule id="Q8S948-1"/>
    <property type="protein sequence ID" value="AT1G78510.1"/>
    <property type="gene ID" value="AT1G78510"/>
</dbReference>
<dbReference type="Gramene" id="AT1G78510.2">
    <molecule id="Q8S948-2"/>
    <property type="protein sequence ID" value="AT1G78510.2"/>
    <property type="gene ID" value="AT1G78510"/>
</dbReference>
<dbReference type="KEGG" id="ath:AT1G78510"/>
<dbReference type="Araport" id="AT1G78510"/>
<dbReference type="TAIR" id="AT1G78510">
    <property type="gene designation" value="SPS1"/>
</dbReference>
<dbReference type="eggNOG" id="KOG0776">
    <property type="taxonomic scope" value="Eukaryota"/>
</dbReference>
<dbReference type="HOGENOM" id="CLU_014015_2_2_1"/>
<dbReference type="InParanoid" id="Q8S948"/>
<dbReference type="OMA" id="GKQMRPM"/>
<dbReference type="PhylomeDB" id="Q8S948"/>
<dbReference type="BioCyc" id="ARA:AT1G78510-MONOMER"/>
<dbReference type="BioCyc" id="MetaCyc:AT1G78510-MONOMER"/>
<dbReference type="BRENDA" id="2.5.1.85">
    <property type="organism ID" value="399"/>
</dbReference>
<dbReference type="PRO" id="PR:Q8S948"/>
<dbReference type="Proteomes" id="UP000006548">
    <property type="component" value="Chromosome 1"/>
</dbReference>
<dbReference type="ExpressionAtlas" id="Q8S948">
    <property type="expression patterns" value="baseline and differential"/>
</dbReference>
<dbReference type="GO" id="GO:0009507">
    <property type="term" value="C:chloroplast"/>
    <property type="evidence" value="ECO:0007669"/>
    <property type="project" value="UniProtKB-SubCell"/>
</dbReference>
<dbReference type="GO" id="GO:0009536">
    <property type="term" value="C:plastid"/>
    <property type="evidence" value="ECO:0000314"/>
    <property type="project" value="TAIR"/>
</dbReference>
<dbReference type="GO" id="GO:0052924">
    <property type="term" value="F:all-trans-nonaprenyl-diphosphate synthase (geranylgeranyl-diphosphate specific) activity"/>
    <property type="evidence" value="ECO:0007669"/>
    <property type="project" value="UniProtKB-EC"/>
</dbReference>
<dbReference type="GO" id="GO:0004311">
    <property type="term" value="F:geranylgeranyl diphosphate synthase activity"/>
    <property type="evidence" value="ECO:0007669"/>
    <property type="project" value="UniProtKB-EC"/>
</dbReference>
<dbReference type="GO" id="GO:0046872">
    <property type="term" value="F:metal ion binding"/>
    <property type="evidence" value="ECO:0007669"/>
    <property type="project" value="UniProtKB-KW"/>
</dbReference>
<dbReference type="GO" id="GO:0008299">
    <property type="term" value="P:isoprenoid biosynthetic process"/>
    <property type="evidence" value="ECO:0007669"/>
    <property type="project" value="UniProtKB-KW"/>
</dbReference>
<dbReference type="GO" id="GO:0010236">
    <property type="term" value="P:plastoquinone biosynthetic process"/>
    <property type="evidence" value="ECO:0000315"/>
    <property type="project" value="TAIR"/>
</dbReference>
<dbReference type="CDD" id="cd00685">
    <property type="entry name" value="Trans_IPPS_HT"/>
    <property type="match status" value="1"/>
</dbReference>
<dbReference type="FunFam" id="1.10.600.10:FF:000017">
    <property type="entry name" value="Solanesyl-diphosphate synthase 2, chloroplastic"/>
    <property type="match status" value="1"/>
</dbReference>
<dbReference type="Gene3D" id="1.10.600.10">
    <property type="entry name" value="Farnesyl Diphosphate Synthase"/>
    <property type="match status" value="1"/>
</dbReference>
<dbReference type="InterPro" id="IPR008949">
    <property type="entry name" value="Isoprenoid_synthase_dom_sf"/>
</dbReference>
<dbReference type="InterPro" id="IPR000092">
    <property type="entry name" value="Polyprenyl_synt"/>
</dbReference>
<dbReference type="InterPro" id="IPR033749">
    <property type="entry name" value="Polyprenyl_synt_CS"/>
</dbReference>
<dbReference type="NCBIfam" id="TIGR02749">
    <property type="entry name" value="prenyl_cyano"/>
    <property type="match status" value="1"/>
</dbReference>
<dbReference type="PANTHER" id="PTHR12001:SF69">
    <property type="entry name" value="ALL TRANS-POLYPRENYL-DIPHOSPHATE SYNTHASE PDSS1"/>
    <property type="match status" value="1"/>
</dbReference>
<dbReference type="PANTHER" id="PTHR12001">
    <property type="entry name" value="GERANYLGERANYL PYROPHOSPHATE SYNTHASE"/>
    <property type="match status" value="1"/>
</dbReference>
<dbReference type="Pfam" id="PF00348">
    <property type="entry name" value="polyprenyl_synt"/>
    <property type="match status" value="1"/>
</dbReference>
<dbReference type="SFLD" id="SFLDS00005">
    <property type="entry name" value="Isoprenoid_Synthase_Type_I"/>
    <property type="match status" value="1"/>
</dbReference>
<dbReference type="SUPFAM" id="SSF48576">
    <property type="entry name" value="Terpenoid synthases"/>
    <property type="match status" value="1"/>
</dbReference>
<dbReference type="PROSITE" id="PS00723">
    <property type="entry name" value="POLYPRENYL_SYNTHASE_1"/>
    <property type="match status" value="1"/>
</dbReference>
<dbReference type="PROSITE" id="PS00444">
    <property type="entry name" value="POLYPRENYL_SYNTHASE_2"/>
    <property type="match status" value="1"/>
</dbReference>
<proteinExistence type="evidence at protein level"/>
<keyword id="KW-0025">Alternative splicing</keyword>
<keyword id="KW-0150">Chloroplast</keyword>
<keyword id="KW-0414">Isoprene biosynthesis</keyword>
<keyword id="KW-0460">Magnesium</keyword>
<keyword id="KW-0479">Metal-binding</keyword>
<keyword id="KW-0934">Plastid</keyword>
<keyword id="KW-1185">Reference proteome</keyword>
<keyword id="KW-0346">Stress response</keyword>
<keyword id="KW-0808">Transferase</keyword>
<keyword id="KW-0809">Transit peptide</keyword>
<protein>
    <recommendedName>
        <fullName evidence="13">Solanesyl diphosphate synthase 1, chloroplastic</fullName>
        <shortName evidence="12">AtSPS1</shortName>
        <ecNumber evidence="5">2.5.1.85</ecNumber>
    </recommendedName>
    <alternativeName>
        <fullName evidence="13">All-trans-nonaprenyl-diphosphate synthase 1 (geranylgeranyl-diphosphate specific)</fullName>
    </alternativeName>
    <alternativeName>
        <fullName evidence="13">Geranylgeranyl diphosphate synthase</fullName>
        <ecNumber evidence="5">2.5.1.29</ecNumber>
    </alternativeName>
</protein>
<name>SPS1_ARATH</name>
<accession>Q8S948</accession>
<accession>A8MQY5</accession>
<accession>Q0WMS5</accession>
<accession>Q9SYN0</accession>
<organism>
    <name type="scientific">Arabidopsis thaliana</name>
    <name type="common">Mouse-ear cress</name>
    <dbReference type="NCBI Taxonomy" id="3702"/>
    <lineage>
        <taxon>Eukaryota</taxon>
        <taxon>Viridiplantae</taxon>
        <taxon>Streptophyta</taxon>
        <taxon>Embryophyta</taxon>
        <taxon>Tracheophyta</taxon>
        <taxon>Spermatophyta</taxon>
        <taxon>Magnoliopsida</taxon>
        <taxon>eudicotyledons</taxon>
        <taxon>Gunneridae</taxon>
        <taxon>Pentapetalae</taxon>
        <taxon>rosids</taxon>
        <taxon>malvids</taxon>
        <taxon>Brassicales</taxon>
        <taxon>Brassicaceae</taxon>
        <taxon>Camelineae</taxon>
        <taxon>Arabidopsis</taxon>
    </lineage>
</organism>